<sequence>MIGMALTAIISTMLIMVLLVVAGTFTWVERRVLGFVQERLGPNRVGPFGFLQWVADTVKILTKEDRPPPGADRVAYILAPMVAATPVLAGFGVVAFGDGLALANIDVGVMFLLGMMGLTVYGVVLGALASHSRFALMGGLRAAAQMLGYEAFLGLSLLGVVMIAGSLSLTEIVHAQRDVWFVLLQPFGAALFCIAGVAAAHRLPFDLPESENDLVAGYLTEYTGMSFGLFFLGEYLAVLLVASLAVTLFFGGWLGPVWLGPYLPGPIWFGLKVGVIALIFIWIRATLPRPRYDQLVRFAWKIALPLALANLLLTGLIVVARSAP</sequence>
<reference key="1">
    <citation type="submission" date="2006-03" db="EMBL/GenBank/DDBJ databases">
        <title>Complete sequence of Rhodopseudomonas palustris BisB18.</title>
        <authorList>
            <consortium name="US DOE Joint Genome Institute"/>
            <person name="Copeland A."/>
            <person name="Lucas S."/>
            <person name="Lapidus A."/>
            <person name="Barry K."/>
            <person name="Detter J.C."/>
            <person name="Glavina del Rio T."/>
            <person name="Hammon N."/>
            <person name="Israni S."/>
            <person name="Dalin E."/>
            <person name="Tice H."/>
            <person name="Pitluck S."/>
            <person name="Chain P."/>
            <person name="Malfatti S."/>
            <person name="Shin M."/>
            <person name="Vergez L."/>
            <person name="Schmutz J."/>
            <person name="Larimer F."/>
            <person name="Land M."/>
            <person name="Hauser L."/>
            <person name="Pelletier D.A."/>
            <person name="Kyrpides N."/>
            <person name="Anderson I."/>
            <person name="Oda Y."/>
            <person name="Harwood C.S."/>
            <person name="Richardson P."/>
        </authorList>
    </citation>
    <scope>NUCLEOTIDE SEQUENCE [LARGE SCALE GENOMIC DNA]</scope>
    <source>
        <strain>BisB18</strain>
    </source>
</reference>
<comment type="function">
    <text evidence="1">NDH-1 shuttles electrons from NADH, via FMN and iron-sulfur (Fe-S) centers, to quinones in the respiratory chain. The immediate electron acceptor for the enzyme in this species is believed to be ubiquinone. Couples the redox reaction to proton translocation (for every two electrons transferred, four hydrogen ions are translocated across the cytoplasmic membrane), and thus conserves the redox energy in a proton gradient. This subunit may bind ubiquinone.</text>
</comment>
<comment type="catalytic activity">
    <reaction evidence="1">
        <text>a quinone + NADH + 5 H(+)(in) = a quinol + NAD(+) + 4 H(+)(out)</text>
        <dbReference type="Rhea" id="RHEA:57888"/>
        <dbReference type="ChEBI" id="CHEBI:15378"/>
        <dbReference type="ChEBI" id="CHEBI:24646"/>
        <dbReference type="ChEBI" id="CHEBI:57540"/>
        <dbReference type="ChEBI" id="CHEBI:57945"/>
        <dbReference type="ChEBI" id="CHEBI:132124"/>
    </reaction>
</comment>
<comment type="subunit">
    <text evidence="1">NDH-1 is composed of 14 different subunits. Subunits NuoA, H, J, K, L, M, N constitute the membrane sector of the complex.</text>
</comment>
<comment type="subcellular location">
    <subcellularLocation>
        <location evidence="1">Cell inner membrane</location>
        <topology evidence="1">Multi-pass membrane protein</topology>
    </subcellularLocation>
</comment>
<comment type="similarity">
    <text evidence="1">Belongs to the complex I subunit 1 family.</text>
</comment>
<evidence type="ECO:0000255" key="1">
    <source>
        <dbReference type="HAMAP-Rule" id="MF_01350"/>
    </source>
</evidence>
<dbReference type="EC" id="7.1.1.-" evidence="1"/>
<dbReference type="EMBL" id="CP000301">
    <property type="protein sequence ID" value="ABD89591.1"/>
    <property type="molecule type" value="Genomic_DNA"/>
</dbReference>
<dbReference type="SMR" id="Q20Z45"/>
<dbReference type="STRING" id="316056.RPC_4065"/>
<dbReference type="KEGG" id="rpc:RPC_4065"/>
<dbReference type="eggNOG" id="COG1005">
    <property type="taxonomic scope" value="Bacteria"/>
</dbReference>
<dbReference type="HOGENOM" id="CLU_015134_0_1_5"/>
<dbReference type="OrthoDB" id="9803734at2"/>
<dbReference type="GO" id="GO:0005886">
    <property type="term" value="C:plasma membrane"/>
    <property type="evidence" value="ECO:0007669"/>
    <property type="project" value="UniProtKB-SubCell"/>
</dbReference>
<dbReference type="GO" id="GO:0003954">
    <property type="term" value="F:NADH dehydrogenase activity"/>
    <property type="evidence" value="ECO:0007669"/>
    <property type="project" value="TreeGrafter"/>
</dbReference>
<dbReference type="GO" id="GO:0016655">
    <property type="term" value="F:oxidoreductase activity, acting on NAD(P)H, quinone or similar compound as acceptor"/>
    <property type="evidence" value="ECO:0007669"/>
    <property type="project" value="UniProtKB-UniRule"/>
</dbReference>
<dbReference type="GO" id="GO:0048038">
    <property type="term" value="F:quinone binding"/>
    <property type="evidence" value="ECO:0007669"/>
    <property type="project" value="UniProtKB-KW"/>
</dbReference>
<dbReference type="GO" id="GO:0009060">
    <property type="term" value="P:aerobic respiration"/>
    <property type="evidence" value="ECO:0007669"/>
    <property type="project" value="TreeGrafter"/>
</dbReference>
<dbReference type="HAMAP" id="MF_01350">
    <property type="entry name" value="NDH1_NuoH"/>
    <property type="match status" value="1"/>
</dbReference>
<dbReference type="InterPro" id="IPR001694">
    <property type="entry name" value="NADH_UbQ_OxRdtase_su1/FPO"/>
</dbReference>
<dbReference type="InterPro" id="IPR018086">
    <property type="entry name" value="NADH_UbQ_OxRdtase_su1_CS"/>
</dbReference>
<dbReference type="NCBIfam" id="NF004741">
    <property type="entry name" value="PRK06076.1-2"/>
    <property type="match status" value="1"/>
</dbReference>
<dbReference type="PANTHER" id="PTHR11432">
    <property type="entry name" value="NADH DEHYDROGENASE SUBUNIT 1"/>
    <property type="match status" value="1"/>
</dbReference>
<dbReference type="PANTHER" id="PTHR11432:SF3">
    <property type="entry name" value="NADH-UBIQUINONE OXIDOREDUCTASE CHAIN 1"/>
    <property type="match status" value="1"/>
</dbReference>
<dbReference type="Pfam" id="PF00146">
    <property type="entry name" value="NADHdh"/>
    <property type="match status" value="1"/>
</dbReference>
<dbReference type="PROSITE" id="PS00668">
    <property type="entry name" value="COMPLEX1_ND1_2"/>
    <property type="match status" value="1"/>
</dbReference>
<keyword id="KW-0997">Cell inner membrane</keyword>
<keyword id="KW-1003">Cell membrane</keyword>
<keyword id="KW-0472">Membrane</keyword>
<keyword id="KW-0520">NAD</keyword>
<keyword id="KW-0874">Quinone</keyword>
<keyword id="KW-1278">Translocase</keyword>
<keyword id="KW-0812">Transmembrane</keyword>
<keyword id="KW-1133">Transmembrane helix</keyword>
<keyword id="KW-0830">Ubiquinone</keyword>
<name>NUOH2_RHOPB</name>
<gene>
    <name evidence="1" type="primary">nuoH2</name>
    <name type="ordered locus">RPC_4065</name>
</gene>
<organism>
    <name type="scientific">Rhodopseudomonas palustris (strain BisB18)</name>
    <dbReference type="NCBI Taxonomy" id="316056"/>
    <lineage>
        <taxon>Bacteria</taxon>
        <taxon>Pseudomonadati</taxon>
        <taxon>Pseudomonadota</taxon>
        <taxon>Alphaproteobacteria</taxon>
        <taxon>Hyphomicrobiales</taxon>
        <taxon>Nitrobacteraceae</taxon>
        <taxon>Rhodopseudomonas</taxon>
    </lineage>
</organism>
<accession>Q20Z45</accession>
<protein>
    <recommendedName>
        <fullName evidence="1">NADH-quinone oxidoreductase subunit H 2</fullName>
        <ecNumber evidence="1">7.1.1.-</ecNumber>
    </recommendedName>
    <alternativeName>
        <fullName evidence="1">NADH dehydrogenase I subunit H 2</fullName>
    </alternativeName>
    <alternativeName>
        <fullName evidence="1">NDH-1 subunit H 2</fullName>
    </alternativeName>
</protein>
<proteinExistence type="inferred from homology"/>
<feature type="chain" id="PRO_0000244945" description="NADH-quinone oxidoreductase subunit H 2">
    <location>
        <begin position="1"/>
        <end position="324"/>
    </location>
</feature>
<feature type="transmembrane region" description="Helical" evidence="1">
    <location>
        <begin position="1"/>
        <end position="21"/>
    </location>
</feature>
<feature type="transmembrane region" description="Helical" evidence="1">
    <location>
        <begin position="77"/>
        <end position="97"/>
    </location>
</feature>
<feature type="transmembrane region" description="Helical" evidence="1">
    <location>
        <begin position="109"/>
        <end position="129"/>
    </location>
</feature>
<feature type="transmembrane region" description="Helical" evidence="1">
    <location>
        <begin position="147"/>
        <end position="167"/>
    </location>
</feature>
<feature type="transmembrane region" description="Helical" evidence="1">
    <location>
        <begin position="179"/>
        <end position="199"/>
    </location>
</feature>
<feature type="transmembrane region" description="Helical" evidence="1">
    <location>
        <begin position="214"/>
        <end position="234"/>
    </location>
</feature>
<feature type="transmembrane region" description="Helical" evidence="1">
    <location>
        <begin position="238"/>
        <end position="258"/>
    </location>
</feature>
<feature type="transmembrane region" description="Helical" evidence="1">
    <location>
        <begin position="263"/>
        <end position="283"/>
    </location>
</feature>
<feature type="transmembrane region" description="Helical" evidence="1">
    <location>
        <begin position="298"/>
        <end position="318"/>
    </location>
</feature>